<organism>
    <name type="scientific">Chassalia parviflora</name>
    <dbReference type="NCBI Taxonomy" id="58431"/>
    <lineage>
        <taxon>Eukaryota</taxon>
        <taxon>Viridiplantae</taxon>
        <taxon>Streptophyta</taxon>
        <taxon>Embryophyta</taxon>
        <taxon>Tracheophyta</taxon>
        <taxon>Spermatophyta</taxon>
        <taxon>Magnoliopsida</taxon>
        <taxon>eudicotyledons</taxon>
        <taxon>Gunneridae</taxon>
        <taxon>Pentapetalae</taxon>
        <taxon>asterids</taxon>
        <taxon>lamiids</taxon>
        <taxon>Gentianales</taxon>
        <taxon>Rubiaceae</taxon>
        <taxon>Rubioideae</taxon>
        <taxon>Palicoureeae</taxon>
        <taxon>Chassalia</taxon>
    </lineage>
</organism>
<comment type="function">
    <text evidence="2 3 4">Probably participates in a plant defense mechanism. Inhibits the cytopathic effects of the human immunodeficiency virus.</text>
</comment>
<comment type="domain">
    <text evidence="1">The presence of a 'disulfide through disulfide knot' structurally defines this protein as a knottin.</text>
</comment>
<comment type="PTM">
    <text evidence="2 3">This is a cyclic peptide.</text>
</comment>
<comment type="mass spectrometry" mass="3397.4" method="FAB" evidence="3"/>
<comment type="similarity">
    <text evidence="2">Belongs to the cyclotide family. Bracelet subfamily.</text>
</comment>
<comment type="caution">
    <text evidence="4">This peptide is cyclic. The start position was chosen by similarity to OAK1 (kalata-B1) for which the DNA sequence is known.</text>
</comment>
<proteinExistence type="evidence at protein level"/>
<feature type="peptide" id="PRO_0000043601" description="Circulin-D" evidence="2 3">
    <location>
        <begin position="1"/>
        <end position="30"/>
    </location>
</feature>
<feature type="disulfide bond" evidence="1 2">
    <location>
        <begin position="4"/>
        <end position="20"/>
    </location>
</feature>
<feature type="disulfide bond" evidence="1 2">
    <location>
        <begin position="8"/>
        <end position="22"/>
    </location>
</feature>
<feature type="disulfide bond" evidence="1 2">
    <location>
        <begin position="13"/>
        <end position="27"/>
    </location>
</feature>
<feature type="cross-link" description="Cyclopeptide (Lys-Asp)" evidence="3">
    <location>
        <begin position="1"/>
        <end position="30"/>
    </location>
</feature>
<reference evidence="4" key="1">
    <citation type="journal article" date="2000" name="J. Nat. Prod.">
        <title>New circulin macrocyclic polypeptides from Chassalia parvifolia.</title>
        <authorList>
            <person name="Gustafson K.R."/>
            <person name="Walton L.K."/>
            <person name="Sowder R.C. Jr."/>
            <person name="Johnson D.G."/>
            <person name="Pannell L.K."/>
            <person name="Cardellina J.H. Jr."/>
            <person name="Boyd M.R."/>
        </authorList>
    </citation>
    <scope>PROTEIN SEQUENCE</scope>
    <scope>FUNCTION</scope>
    <scope>MASS SPECTROMETRY</scope>
</reference>
<keyword id="KW-0930">Antiviral protein</keyword>
<keyword id="KW-0903">Direct protein sequencing</keyword>
<keyword id="KW-1015">Disulfide bond</keyword>
<keyword id="KW-0960">Knottin</keyword>
<keyword id="KW-0611">Plant defense</keyword>
<sequence length="30" mass="3420">KIPCGESCVWIPCVTSIFNCKCENKVCYHD</sequence>
<dbReference type="SMR" id="P84642"/>
<dbReference type="GO" id="GO:0006952">
    <property type="term" value="P:defense response"/>
    <property type="evidence" value="ECO:0000314"/>
    <property type="project" value="UniProtKB"/>
</dbReference>
<dbReference type="GO" id="GO:0050688">
    <property type="term" value="P:regulation of defense response to virus"/>
    <property type="evidence" value="ECO:0007669"/>
    <property type="project" value="UniProtKB-KW"/>
</dbReference>
<dbReference type="InterPro" id="IPR005535">
    <property type="entry name" value="Cyclotide"/>
</dbReference>
<dbReference type="InterPro" id="IPR012323">
    <property type="entry name" value="Cyclotide_bracelet_CS"/>
</dbReference>
<dbReference type="InterPro" id="IPR036146">
    <property type="entry name" value="Cyclotide_sf"/>
</dbReference>
<dbReference type="Pfam" id="PF03784">
    <property type="entry name" value="Cyclotide"/>
    <property type="match status" value="1"/>
</dbReference>
<dbReference type="PIRSF" id="PIRSF037891">
    <property type="entry name" value="Cycloviolacin"/>
    <property type="match status" value="1"/>
</dbReference>
<dbReference type="SUPFAM" id="SSF57038">
    <property type="entry name" value="Cyclotides"/>
    <property type="match status" value="1"/>
</dbReference>
<dbReference type="PROSITE" id="PS51052">
    <property type="entry name" value="CYCLOTIDE"/>
    <property type="match status" value="1"/>
</dbReference>
<dbReference type="PROSITE" id="PS60008">
    <property type="entry name" value="CYCLOTIDE_BRACELET"/>
    <property type="match status" value="1"/>
</dbReference>
<protein>
    <recommendedName>
        <fullName>Circulin-D</fullName>
        <shortName>CIRD</shortName>
    </recommendedName>
</protein>
<evidence type="ECO:0000250" key="1">
    <source>
        <dbReference type="UniProtKB" id="P56871"/>
    </source>
</evidence>
<evidence type="ECO:0000255" key="2">
    <source>
        <dbReference type="PROSITE-ProRule" id="PRU00395"/>
    </source>
</evidence>
<evidence type="ECO:0000269" key="3">
    <source>
    </source>
</evidence>
<evidence type="ECO:0000305" key="4"/>
<accession>P84642</accession>
<name>CIRD_CHAPA</name>